<reference key="1">
    <citation type="submission" date="1997-07" db="EMBL/GenBank/DDBJ databases">
        <title>The 55-58 degree segment of the Bacillus subtilis chromosome, a region spanning from the purA gene cluster to the cotJ operon.</title>
        <authorList>
            <person name="Borriss R."/>
            <person name="Schroeter R."/>
        </authorList>
    </citation>
    <scope>NUCLEOTIDE SEQUENCE [GENOMIC DNA]</scope>
    <source>
        <strain>168</strain>
    </source>
</reference>
<reference key="2">
    <citation type="journal article" date="1997" name="Nature">
        <title>The complete genome sequence of the Gram-positive bacterium Bacillus subtilis.</title>
        <authorList>
            <person name="Kunst F."/>
            <person name="Ogasawara N."/>
            <person name="Moszer I."/>
            <person name="Albertini A.M."/>
            <person name="Alloni G."/>
            <person name="Azevedo V."/>
            <person name="Bertero M.G."/>
            <person name="Bessieres P."/>
            <person name="Bolotin A."/>
            <person name="Borchert S."/>
            <person name="Borriss R."/>
            <person name="Boursier L."/>
            <person name="Brans A."/>
            <person name="Braun M."/>
            <person name="Brignell S.C."/>
            <person name="Bron S."/>
            <person name="Brouillet S."/>
            <person name="Bruschi C.V."/>
            <person name="Caldwell B."/>
            <person name="Capuano V."/>
            <person name="Carter N.M."/>
            <person name="Choi S.-K."/>
            <person name="Codani J.-J."/>
            <person name="Connerton I.F."/>
            <person name="Cummings N.J."/>
            <person name="Daniel R.A."/>
            <person name="Denizot F."/>
            <person name="Devine K.M."/>
            <person name="Duesterhoeft A."/>
            <person name="Ehrlich S.D."/>
            <person name="Emmerson P.T."/>
            <person name="Entian K.-D."/>
            <person name="Errington J."/>
            <person name="Fabret C."/>
            <person name="Ferrari E."/>
            <person name="Foulger D."/>
            <person name="Fritz C."/>
            <person name="Fujita M."/>
            <person name="Fujita Y."/>
            <person name="Fuma S."/>
            <person name="Galizzi A."/>
            <person name="Galleron N."/>
            <person name="Ghim S.-Y."/>
            <person name="Glaser P."/>
            <person name="Goffeau A."/>
            <person name="Golightly E.J."/>
            <person name="Grandi G."/>
            <person name="Guiseppi G."/>
            <person name="Guy B.J."/>
            <person name="Haga K."/>
            <person name="Haiech J."/>
            <person name="Harwood C.R."/>
            <person name="Henaut A."/>
            <person name="Hilbert H."/>
            <person name="Holsappel S."/>
            <person name="Hosono S."/>
            <person name="Hullo M.-F."/>
            <person name="Itaya M."/>
            <person name="Jones L.-M."/>
            <person name="Joris B."/>
            <person name="Karamata D."/>
            <person name="Kasahara Y."/>
            <person name="Klaerr-Blanchard M."/>
            <person name="Klein C."/>
            <person name="Kobayashi Y."/>
            <person name="Koetter P."/>
            <person name="Koningstein G."/>
            <person name="Krogh S."/>
            <person name="Kumano M."/>
            <person name="Kurita K."/>
            <person name="Lapidus A."/>
            <person name="Lardinois S."/>
            <person name="Lauber J."/>
            <person name="Lazarevic V."/>
            <person name="Lee S.-M."/>
            <person name="Levine A."/>
            <person name="Liu H."/>
            <person name="Masuda S."/>
            <person name="Mauel C."/>
            <person name="Medigue C."/>
            <person name="Medina N."/>
            <person name="Mellado R.P."/>
            <person name="Mizuno M."/>
            <person name="Moestl D."/>
            <person name="Nakai S."/>
            <person name="Noback M."/>
            <person name="Noone D."/>
            <person name="O'Reilly M."/>
            <person name="Ogawa K."/>
            <person name="Ogiwara A."/>
            <person name="Oudega B."/>
            <person name="Park S.-H."/>
            <person name="Parro V."/>
            <person name="Pohl T.M."/>
            <person name="Portetelle D."/>
            <person name="Porwollik S."/>
            <person name="Prescott A.M."/>
            <person name="Presecan E."/>
            <person name="Pujic P."/>
            <person name="Purnelle B."/>
            <person name="Rapoport G."/>
            <person name="Rey M."/>
            <person name="Reynolds S."/>
            <person name="Rieger M."/>
            <person name="Rivolta C."/>
            <person name="Rocha E."/>
            <person name="Roche B."/>
            <person name="Rose M."/>
            <person name="Sadaie Y."/>
            <person name="Sato T."/>
            <person name="Scanlan E."/>
            <person name="Schleich S."/>
            <person name="Schroeter R."/>
            <person name="Scoffone F."/>
            <person name="Sekiguchi J."/>
            <person name="Sekowska A."/>
            <person name="Seror S.J."/>
            <person name="Serror P."/>
            <person name="Shin B.-S."/>
            <person name="Soldo B."/>
            <person name="Sorokin A."/>
            <person name="Tacconi E."/>
            <person name="Takagi T."/>
            <person name="Takahashi H."/>
            <person name="Takemaru K."/>
            <person name="Takeuchi M."/>
            <person name="Tamakoshi A."/>
            <person name="Tanaka T."/>
            <person name="Terpstra P."/>
            <person name="Tognoni A."/>
            <person name="Tosato V."/>
            <person name="Uchiyama S."/>
            <person name="Vandenbol M."/>
            <person name="Vannier F."/>
            <person name="Vassarotti A."/>
            <person name="Viari A."/>
            <person name="Wambutt R."/>
            <person name="Wedler E."/>
            <person name="Wedler H."/>
            <person name="Weitzenegger T."/>
            <person name="Winters P."/>
            <person name="Wipat A."/>
            <person name="Yamamoto H."/>
            <person name="Yamane K."/>
            <person name="Yasumoto K."/>
            <person name="Yata K."/>
            <person name="Yoshida K."/>
            <person name="Yoshikawa H.-F."/>
            <person name="Zumstein E."/>
            <person name="Yoshikawa H."/>
            <person name="Danchin A."/>
        </authorList>
    </citation>
    <scope>NUCLEOTIDE SEQUENCE [LARGE SCALE GENOMIC DNA]</scope>
    <source>
        <strain>168</strain>
    </source>
</reference>
<reference key="3">
    <citation type="journal article" date="2009" name="Microbiology">
        <title>From a consortium sequence to a unified sequence: the Bacillus subtilis 168 reference genome a decade later.</title>
        <authorList>
            <person name="Barbe V."/>
            <person name="Cruveiller S."/>
            <person name="Kunst F."/>
            <person name="Lenoble P."/>
            <person name="Meurice G."/>
            <person name="Sekowska A."/>
            <person name="Vallenet D."/>
            <person name="Wang T."/>
            <person name="Moszer I."/>
            <person name="Medigue C."/>
            <person name="Danchin A."/>
        </authorList>
    </citation>
    <scope>SEQUENCE REVISION TO 338</scope>
</reference>
<organism>
    <name type="scientific">Bacillus subtilis (strain 168)</name>
    <dbReference type="NCBI Taxonomy" id="224308"/>
    <lineage>
        <taxon>Bacteria</taxon>
        <taxon>Bacillati</taxon>
        <taxon>Bacillota</taxon>
        <taxon>Bacilli</taxon>
        <taxon>Bacillales</taxon>
        <taxon>Bacillaceae</taxon>
        <taxon>Bacillus</taxon>
    </lineage>
</organism>
<protein>
    <recommendedName>
        <fullName>Uncharacterized protein YeeC</fullName>
    </recommendedName>
</protein>
<dbReference type="EMBL" id="AF012532">
    <property type="protein sequence ID" value="AAB66476.1"/>
    <property type="molecule type" value="Genomic_DNA"/>
</dbReference>
<dbReference type="EMBL" id="AL009126">
    <property type="protein sequence ID" value="CAB12498.2"/>
    <property type="molecule type" value="Genomic_DNA"/>
</dbReference>
<dbReference type="PIR" id="G69792">
    <property type="entry name" value="G69792"/>
</dbReference>
<dbReference type="RefSeq" id="NP_388560.2">
    <property type="nucleotide sequence ID" value="NC_000964.3"/>
</dbReference>
<dbReference type="RefSeq" id="WP_009966754.1">
    <property type="nucleotide sequence ID" value="NZ_OZ025638.1"/>
</dbReference>
<dbReference type="SMR" id="O34352"/>
<dbReference type="FunCoup" id="O34352">
    <property type="interactions" value="25"/>
</dbReference>
<dbReference type="STRING" id="224308.BSU06780"/>
<dbReference type="PaxDb" id="224308-BSU06780"/>
<dbReference type="EnsemblBacteria" id="CAB12498">
    <property type="protein sequence ID" value="CAB12498"/>
    <property type="gene ID" value="BSU_06780"/>
</dbReference>
<dbReference type="GeneID" id="936062"/>
<dbReference type="KEGG" id="bsu:BSU06780"/>
<dbReference type="PATRIC" id="fig|224308.179.peg.736"/>
<dbReference type="eggNOG" id="COG0226">
    <property type="taxonomic scope" value="Bacteria"/>
</dbReference>
<dbReference type="InParanoid" id="O34352"/>
<dbReference type="OrthoDB" id="9814995at2"/>
<dbReference type="BioCyc" id="BSUB:BSU06780-MONOMER"/>
<dbReference type="Proteomes" id="UP000001570">
    <property type="component" value="Chromosome"/>
</dbReference>
<dbReference type="InterPro" id="IPR018306">
    <property type="entry name" value="Phage_T5_Orf172_DNA-bd"/>
</dbReference>
<dbReference type="Pfam" id="PF13455">
    <property type="entry name" value="MUG113"/>
    <property type="match status" value="1"/>
</dbReference>
<dbReference type="SMART" id="SM00974">
    <property type="entry name" value="T5orf172"/>
    <property type="match status" value="1"/>
</dbReference>
<name>YEEC_BACSU</name>
<gene>
    <name type="primary">yeeC</name>
    <name type="ordered locus">BSU06780</name>
</gene>
<keyword id="KW-1185">Reference proteome</keyword>
<sequence>MASNRYHSINEIMESQLFYQITTPPKKTQKAQYDPEVEKFLEIIEFVKENGREPQKVPTDLTERSLASRLIGIRKDPDRMEYLKEYDEIGLLEVRSKELTIPKISSIDDILKSGLSALLGDNLNNDITRSIFDTSSLQKVTTMPEYVAKRKKIKDFGKFEELFKKCHKEITEGKRKILTFKNEQDIQSNSFYILKGVLLYVEDVGERKKAKGKTNARLRCIFENGTESDMLLRSLSAELYKHGRRVTDNEDTLLDNVREDDVSTGFIYVLKSLSTDPQISSIKNLYKIGFTTGSVENRIRNAENQSTYLYAPVEIVTTYQVFNMNASKFETAIHHALANNNLDVSILGANGKMLVPKEWFVVTLEDLQAVIDEIVMMVHLYD</sequence>
<feature type="chain" id="PRO_0000359960" description="Uncharacterized protein YeeC">
    <location>
        <begin position="1"/>
        <end position="382"/>
    </location>
</feature>
<feature type="sequence conflict" description="In Ref. 1; AAB66476." evidence="1" ref="1">
    <original>A</original>
    <variation>E</variation>
    <location>
        <position position="338"/>
    </location>
</feature>
<proteinExistence type="predicted"/>
<evidence type="ECO:0000305" key="1"/>
<accession>O34352</accession>
<accession>Q7BVR0</accession>